<name>KLD8B_MOUSE</name>
<reference key="1">
    <citation type="journal article" date="2005" name="Science">
        <title>The transcriptional landscape of the mammalian genome.</title>
        <authorList>
            <person name="Carninci P."/>
            <person name="Kasukawa T."/>
            <person name="Katayama S."/>
            <person name="Gough J."/>
            <person name="Frith M.C."/>
            <person name="Maeda N."/>
            <person name="Oyama R."/>
            <person name="Ravasi T."/>
            <person name="Lenhard B."/>
            <person name="Wells C."/>
            <person name="Kodzius R."/>
            <person name="Shimokawa K."/>
            <person name="Bajic V.B."/>
            <person name="Brenner S.E."/>
            <person name="Batalov S."/>
            <person name="Forrest A.R."/>
            <person name="Zavolan M."/>
            <person name="Davis M.J."/>
            <person name="Wilming L.G."/>
            <person name="Aidinis V."/>
            <person name="Allen J.E."/>
            <person name="Ambesi-Impiombato A."/>
            <person name="Apweiler R."/>
            <person name="Aturaliya R.N."/>
            <person name="Bailey T.L."/>
            <person name="Bansal M."/>
            <person name="Baxter L."/>
            <person name="Beisel K.W."/>
            <person name="Bersano T."/>
            <person name="Bono H."/>
            <person name="Chalk A.M."/>
            <person name="Chiu K.P."/>
            <person name="Choudhary V."/>
            <person name="Christoffels A."/>
            <person name="Clutterbuck D.R."/>
            <person name="Crowe M.L."/>
            <person name="Dalla E."/>
            <person name="Dalrymple B.P."/>
            <person name="de Bono B."/>
            <person name="Della Gatta G."/>
            <person name="di Bernardo D."/>
            <person name="Down T."/>
            <person name="Engstrom P."/>
            <person name="Fagiolini M."/>
            <person name="Faulkner G."/>
            <person name="Fletcher C.F."/>
            <person name="Fukushima T."/>
            <person name="Furuno M."/>
            <person name="Futaki S."/>
            <person name="Gariboldi M."/>
            <person name="Georgii-Hemming P."/>
            <person name="Gingeras T.R."/>
            <person name="Gojobori T."/>
            <person name="Green R.E."/>
            <person name="Gustincich S."/>
            <person name="Harbers M."/>
            <person name="Hayashi Y."/>
            <person name="Hensch T.K."/>
            <person name="Hirokawa N."/>
            <person name="Hill D."/>
            <person name="Huminiecki L."/>
            <person name="Iacono M."/>
            <person name="Ikeo K."/>
            <person name="Iwama A."/>
            <person name="Ishikawa T."/>
            <person name="Jakt M."/>
            <person name="Kanapin A."/>
            <person name="Katoh M."/>
            <person name="Kawasawa Y."/>
            <person name="Kelso J."/>
            <person name="Kitamura H."/>
            <person name="Kitano H."/>
            <person name="Kollias G."/>
            <person name="Krishnan S.P."/>
            <person name="Kruger A."/>
            <person name="Kummerfeld S.K."/>
            <person name="Kurochkin I.V."/>
            <person name="Lareau L.F."/>
            <person name="Lazarevic D."/>
            <person name="Lipovich L."/>
            <person name="Liu J."/>
            <person name="Liuni S."/>
            <person name="McWilliam S."/>
            <person name="Madan Babu M."/>
            <person name="Madera M."/>
            <person name="Marchionni L."/>
            <person name="Matsuda H."/>
            <person name="Matsuzawa S."/>
            <person name="Miki H."/>
            <person name="Mignone F."/>
            <person name="Miyake S."/>
            <person name="Morris K."/>
            <person name="Mottagui-Tabar S."/>
            <person name="Mulder N."/>
            <person name="Nakano N."/>
            <person name="Nakauchi H."/>
            <person name="Ng P."/>
            <person name="Nilsson R."/>
            <person name="Nishiguchi S."/>
            <person name="Nishikawa S."/>
            <person name="Nori F."/>
            <person name="Ohara O."/>
            <person name="Okazaki Y."/>
            <person name="Orlando V."/>
            <person name="Pang K.C."/>
            <person name="Pavan W.J."/>
            <person name="Pavesi G."/>
            <person name="Pesole G."/>
            <person name="Petrovsky N."/>
            <person name="Piazza S."/>
            <person name="Reed J."/>
            <person name="Reid J.F."/>
            <person name="Ring B.Z."/>
            <person name="Ringwald M."/>
            <person name="Rost B."/>
            <person name="Ruan Y."/>
            <person name="Salzberg S.L."/>
            <person name="Sandelin A."/>
            <person name="Schneider C."/>
            <person name="Schoenbach C."/>
            <person name="Sekiguchi K."/>
            <person name="Semple C.A."/>
            <person name="Seno S."/>
            <person name="Sessa L."/>
            <person name="Sheng Y."/>
            <person name="Shibata Y."/>
            <person name="Shimada H."/>
            <person name="Shimada K."/>
            <person name="Silva D."/>
            <person name="Sinclair B."/>
            <person name="Sperling S."/>
            <person name="Stupka E."/>
            <person name="Sugiura K."/>
            <person name="Sultana R."/>
            <person name="Takenaka Y."/>
            <person name="Taki K."/>
            <person name="Tammoja K."/>
            <person name="Tan S.L."/>
            <person name="Tang S."/>
            <person name="Taylor M.S."/>
            <person name="Tegner J."/>
            <person name="Teichmann S.A."/>
            <person name="Ueda H.R."/>
            <person name="van Nimwegen E."/>
            <person name="Verardo R."/>
            <person name="Wei C.L."/>
            <person name="Yagi K."/>
            <person name="Yamanishi H."/>
            <person name="Zabarovsky E."/>
            <person name="Zhu S."/>
            <person name="Zimmer A."/>
            <person name="Hide W."/>
            <person name="Bult C."/>
            <person name="Grimmond S.M."/>
            <person name="Teasdale R.D."/>
            <person name="Liu E.T."/>
            <person name="Brusic V."/>
            <person name="Quackenbush J."/>
            <person name="Wahlestedt C."/>
            <person name="Mattick J.S."/>
            <person name="Hume D.A."/>
            <person name="Kai C."/>
            <person name="Sasaki D."/>
            <person name="Tomaru Y."/>
            <person name="Fukuda S."/>
            <person name="Kanamori-Katayama M."/>
            <person name="Suzuki M."/>
            <person name="Aoki J."/>
            <person name="Arakawa T."/>
            <person name="Iida J."/>
            <person name="Imamura K."/>
            <person name="Itoh M."/>
            <person name="Kato T."/>
            <person name="Kawaji H."/>
            <person name="Kawagashira N."/>
            <person name="Kawashima T."/>
            <person name="Kojima M."/>
            <person name="Kondo S."/>
            <person name="Konno H."/>
            <person name="Nakano K."/>
            <person name="Ninomiya N."/>
            <person name="Nishio T."/>
            <person name="Okada M."/>
            <person name="Plessy C."/>
            <person name="Shibata K."/>
            <person name="Shiraki T."/>
            <person name="Suzuki S."/>
            <person name="Tagami M."/>
            <person name="Waki K."/>
            <person name="Watahiki A."/>
            <person name="Okamura-Oho Y."/>
            <person name="Suzuki H."/>
            <person name="Kawai J."/>
            <person name="Hayashizaki Y."/>
        </authorList>
    </citation>
    <scope>NUCLEOTIDE SEQUENCE [LARGE SCALE MRNA]</scope>
    <source>
        <strain>C57BL/6J</strain>
        <strain>NOD</strain>
        <tissue>Testis</tissue>
    </source>
</reference>
<reference key="2">
    <citation type="journal article" date="2004" name="Genome Res.">
        <title>The status, quality, and expansion of the NIH full-length cDNA project: the Mammalian Gene Collection (MGC).</title>
        <authorList>
            <consortium name="The MGC Project Team"/>
        </authorList>
    </citation>
    <scope>NUCLEOTIDE SEQUENCE [LARGE SCALE MRNA]</scope>
    <source>
        <tissue>Olfactory epithelium</tissue>
    </source>
</reference>
<sequence length="354" mass="37592">MAAGGGRAFAWQVFPPMPTCRVYGTVAHQDGHLLVLGGCGRAGLPLDTAETLDMGSHTWLALAPLPTARAGAAAVVLGKQVLVVGGVDEVQSPVAAVEAFLADEGRWERRATLPQAAMGVATVERDGMVYALGGMGPDTAPQAQVLVYEPRRDCWLSLPSMPTPCYGASTFLHGNKIYVLGGRQGKLPVTAFEAFDLETRTWTRHPSLPSRRAFAGCAMAEGSVFSLGGLQQPGPHNFYSRPHFVNTVEMFDLEHGSWTKLPRSLRMRDKRADFVVGSLGGNIVAIGGLGNQPCPLASVESFSLARRRWEVLPAMPTARCSCSSLQAGPRLFVIGGVAQGPSQAVEALCLRDGV</sequence>
<dbReference type="EMBL" id="AK019849">
    <property type="protein sequence ID" value="BAB31879.1"/>
    <property type="molecule type" value="mRNA"/>
</dbReference>
<dbReference type="EMBL" id="AK154428">
    <property type="protein sequence ID" value="BAE32579.1"/>
    <property type="molecule type" value="mRNA"/>
</dbReference>
<dbReference type="EMBL" id="BC048918">
    <property type="protein sequence ID" value="AAH48918.1"/>
    <property type="molecule type" value="mRNA"/>
</dbReference>
<dbReference type="CCDS" id="CCDS23526.1"/>
<dbReference type="RefSeq" id="NP_001346357.1">
    <property type="nucleotide sequence ID" value="NM_001359428.1"/>
</dbReference>
<dbReference type="RefSeq" id="NP_084351.1">
    <property type="nucleotide sequence ID" value="NM_030075.2"/>
</dbReference>
<dbReference type="RefSeq" id="XP_017169186.1">
    <property type="nucleotide sequence ID" value="XM_017313697.1"/>
</dbReference>
<dbReference type="RefSeq" id="XP_030100576.1">
    <property type="nucleotide sequence ID" value="XM_030244716.2"/>
</dbReference>
<dbReference type="RefSeq" id="XP_030100577.1">
    <property type="nucleotide sequence ID" value="XM_030244717.2"/>
</dbReference>
<dbReference type="RefSeq" id="XP_030100578.1">
    <property type="nucleotide sequence ID" value="XM_030244718.2"/>
</dbReference>
<dbReference type="RefSeq" id="XP_030100579.1">
    <property type="nucleotide sequence ID" value="XM_030244719.2"/>
</dbReference>
<dbReference type="RefSeq" id="XP_030100581.1">
    <property type="nucleotide sequence ID" value="XM_030244721.2"/>
</dbReference>
<dbReference type="RefSeq" id="XP_030100583.1">
    <property type="nucleotide sequence ID" value="XM_030244723.2"/>
</dbReference>
<dbReference type="RefSeq" id="XP_030100584.1">
    <property type="nucleotide sequence ID" value="XM_030244724.2"/>
</dbReference>
<dbReference type="RefSeq" id="XP_036011301.1">
    <property type="nucleotide sequence ID" value="XM_036155408.1"/>
</dbReference>
<dbReference type="SMR" id="Q9D2D9"/>
<dbReference type="FunCoup" id="Q9D2D9">
    <property type="interactions" value="162"/>
</dbReference>
<dbReference type="IntAct" id="Q9D2D9">
    <property type="interactions" value="1"/>
</dbReference>
<dbReference type="STRING" id="10090.ENSMUSP00000142325"/>
<dbReference type="GlyGen" id="Q9D2D9">
    <property type="glycosylation" value="1 site"/>
</dbReference>
<dbReference type="iPTMnet" id="Q9D2D9"/>
<dbReference type="PhosphoSitePlus" id="Q9D2D9"/>
<dbReference type="PaxDb" id="10090-ENSMUSP00000035232"/>
<dbReference type="ProteomicsDB" id="263616"/>
<dbReference type="Antibodypedia" id="2038">
    <property type="antibodies" value="144 antibodies from 23 providers"/>
</dbReference>
<dbReference type="DNASU" id="78267"/>
<dbReference type="Ensembl" id="ENSMUST00000035232.13">
    <property type="protein sequence ID" value="ENSMUSP00000035232.8"/>
    <property type="gene ID" value="ENSMUSG00000032609.13"/>
</dbReference>
<dbReference type="Ensembl" id="ENSMUST00000193286.6">
    <property type="protein sequence ID" value="ENSMUSP00000142325.2"/>
    <property type="gene ID" value="ENSMUSG00000032609.13"/>
</dbReference>
<dbReference type="Ensembl" id="ENSMUST00000193895.6">
    <property type="protein sequence ID" value="ENSMUSP00000141453.2"/>
    <property type="gene ID" value="ENSMUSG00000032609.13"/>
</dbReference>
<dbReference type="GeneID" id="78267"/>
<dbReference type="KEGG" id="mmu:78267"/>
<dbReference type="UCSC" id="uc009rpo.1">
    <property type="organism name" value="mouse"/>
</dbReference>
<dbReference type="AGR" id="MGI:1925517"/>
<dbReference type="CTD" id="200942"/>
<dbReference type="MGI" id="MGI:1925517">
    <property type="gene designation" value="Klhdc8b"/>
</dbReference>
<dbReference type="VEuPathDB" id="HostDB:ENSMUSG00000032609"/>
<dbReference type="eggNOG" id="KOG1072">
    <property type="taxonomic scope" value="Eukaryota"/>
</dbReference>
<dbReference type="GeneTree" id="ENSGT00940000160815"/>
<dbReference type="HOGENOM" id="CLU_046864_0_0_1"/>
<dbReference type="InParanoid" id="Q9D2D9"/>
<dbReference type="OMA" id="VWIKPSR"/>
<dbReference type="OrthoDB" id="45365at2759"/>
<dbReference type="PhylomeDB" id="Q9D2D9"/>
<dbReference type="BioGRID-ORCS" id="78267">
    <property type="hits" value="2 hits in 77 CRISPR screens"/>
</dbReference>
<dbReference type="ChiTaRS" id="Klhdc8b">
    <property type="organism name" value="mouse"/>
</dbReference>
<dbReference type="PRO" id="PR:Q9D2D9"/>
<dbReference type="Proteomes" id="UP000000589">
    <property type="component" value="Chromosome 9"/>
</dbReference>
<dbReference type="RNAct" id="Q9D2D9">
    <property type="molecule type" value="protein"/>
</dbReference>
<dbReference type="Bgee" id="ENSMUSG00000032609">
    <property type="expression patterns" value="Expressed in dorsal pancreas and 194 other cell types or tissues"/>
</dbReference>
<dbReference type="ExpressionAtlas" id="Q9D2D9">
    <property type="expression patterns" value="baseline and differential"/>
</dbReference>
<dbReference type="GO" id="GO:0110070">
    <property type="term" value="C:cellularization cleavage furrow"/>
    <property type="evidence" value="ECO:0000250"/>
    <property type="project" value="UniProtKB"/>
</dbReference>
<dbReference type="GO" id="GO:0005737">
    <property type="term" value="C:cytoplasm"/>
    <property type="evidence" value="ECO:0000250"/>
    <property type="project" value="UniProtKB"/>
</dbReference>
<dbReference type="GO" id="GO:0005829">
    <property type="term" value="C:cytosol"/>
    <property type="evidence" value="ECO:0007669"/>
    <property type="project" value="Ensembl"/>
</dbReference>
<dbReference type="GO" id="GO:0045171">
    <property type="term" value="C:intercellular bridge"/>
    <property type="evidence" value="ECO:0000250"/>
    <property type="project" value="UniProtKB"/>
</dbReference>
<dbReference type="GO" id="GO:0030496">
    <property type="term" value="C:midbody"/>
    <property type="evidence" value="ECO:0000250"/>
    <property type="project" value="UniProtKB"/>
</dbReference>
<dbReference type="GO" id="GO:1902410">
    <property type="term" value="P:mitotic cytokinetic process"/>
    <property type="evidence" value="ECO:0000250"/>
    <property type="project" value="UniProtKB"/>
</dbReference>
<dbReference type="GO" id="GO:0140014">
    <property type="term" value="P:mitotic nuclear division"/>
    <property type="evidence" value="ECO:0000250"/>
    <property type="project" value="UniProtKB"/>
</dbReference>
<dbReference type="GO" id="GO:0098813">
    <property type="term" value="P:nuclear chromosome segregation"/>
    <property type="evidence" value="ECO:0000250"/>
    <property type="project" value="UniProtKB"/>
</dbReference>
<dbReference type="FunFam" id="2.120.10.80:FF:000053">
    <property type="entry name" value="Kelch domain-containing protein 8B"/>
    <property type="match status" value="1"/>
</dbReference>
<dbReference type="FunFam" id="2.120.10.80:FF:000066">
    <property type="entry name" value="Kelch domain-containing protein 8B"/>
    <property type="match status" value="1"/>
</dbReference>
<dbReference type="Gene3D" id="2.120.10.80">
    <property type="entry name" value="Kelch-type beta propeller"/>
    <property type="match status" value="2"/>
</dbReference>
<dbReference type="InterPro" id="IPR015915">
    <property type="entry name" value="Kelch-typ_b-propeller"/>
</dbReference>
<dbReference type="InterPro" id="IPR006652">
    <property type="entry name" value="Kelch_1"/>
</dbReference>
<dbReference type="InterPro" id="IPR051746">
    <property type="entry name" value="Kelch_domain_containing_8"/>
</dbReference>
<dbReference type="PANTHER" id="PTHR46260:SF2">
    <property type="entry name" value="KELCH DOMAIN-CONTAINING PROTEIN 8B"/>
    <property type="match status" value="1"/>
</dbReference>
<dbReference type="PANTHER" id="PTHR46260">
    <property type="entry name" value="RING-TYPE DOMAIN-CONTAINING PROTEIN"/>
    <property type="match status" value="1"/>
</dbReference>
<dbReference type="Pfam" id="PF01344">
    <property type="entry name" value="Kelch_1"/>
    <property type="match status" value="2"/>
</dbReference>
<dbReference type="Pfam" id="PF24681">
    <property type="entry name" value="Kelch_KLHDC2_KLHL20_DRC7"/>
    <property type="match status" value="1"/>
</dbReference>
<dbReference type="SMART" id="SM00612">
    <property type="entry name" value="Kelch"/>
    <property type="match status" value="6"/>
</dbReference>
<dbReference type="SUPFAM" id="SSF117281">
    <property type="entry name" value="Kelch motif"/>
    <property type="match status" value="2"/>
</dbReference>
<protein>
    <recommendedName>
        <fullName>Kelch domain-containing protein 8B</fullName>
    </recommendedName>
</protein>
<accession>Q9D2D9</accession>
<feature type="chain" id="PRO_0000119132" description="Kelch domain-containing protein 8B">
    <location>
        <begin position="1"/>
        <end position="354"/>
    </location>
</feature>
<feature type="repeat" description="Kelch 1">
    <location>
        <begin position="1"/>
        <end position="31"/>
    </location>
</feature>
<feature type="repeat" description="Kelch 2">
    <location>
        <begin position="32"/>
        <end position="79"/>
    </location>
</feature>
<feature type="repeat" description="Kelch 3">
    <location>
        <begin position="81"/>
        <end position="127"/>
    </location>
</feature>
<feature type="repeat" description="Kelch 4">
    <location>
        <begin position="128"/>
        <end position="175"/>
    </location>
</feature>
<feature type="repeat" description="Kelch 5">
    <location>
        <begin position="176"/>
        <end position="222"/>
    </location>
</feature>
<feature type="repeat" description="Kelch 6">
    <location>
        <begin position="224"/>
        <end position="281"/>
    </location>
</feature>
<feature type="repeat" description="Kelch 7">
    <location>
        <begin position="282"/>
        <end position="329"/>
    </location>
</feature>
<feature type="repeat" description="Kelch 8">
    <location>
        <begin position="331"/>
        <end position="354"/>
    </location>
</feature>
<proteinExistence type="evidence at transcript level"/>
<evidence type="ECO:0000250" key="1">
    <source>
        <dbReference type="UniProtKB" id="Q8IXV7"/>
    </source>
</evidence>
<keyword id="KW-0131">Cell cycle</keyword>
<keyword id="KW-0132">Cell division</keyword>
<keyword id="KW-0963">Cytoplasm</keyword>
<keyword id="KW-0880">Kelch repeat</keyword>
<keyword id="KW-1185">Reference proteome</keyword>
<keyword id="KW-0677">Repeat</keyword>
<organism>
    <name type="scientific">Mus musculus</name>
    <name type="common">Mouse</name>
    <dbReference type="NCBI Taxonomy" id="10090"/>
    <lineage>
        <taxon>Eukaryota</taxon>
        <taxon>Metazoa</taxon>
        <taxon>Chordata</taxon>
        <taxon>Craniata</taxon>
        <taxon>Vertebrata</taxon>
        <taxon>Euteleostomi</taxon>
        <taxon>Mammalia</taxon>
        <taxon>Eutheria</taxon>
        <taxon>Euarchontoglires</taxon>
        <taxon>Glires</taxon>
        <taxon>Rodentia</taxon>
        <taxon>Myomorpha</taxon>
        <taxon>Muroidea</taxon>
        <taxon>Muridae</taxon>
        <taxon>Murinae</taxon>
        <taxon>Mus</taxon>
        <taxon>Mus</taxon>
    </lineage>
</organism>
<comment type="function">
    <text evidence="1">Involved in pinching off the separated nuclei at the cleavage furrow and in cytokinesis. Required for mitotic integrity and maintenance of chromosomal stability. Protects cells against mitotic errors, centrosomal amplification, micronucleus formation and aneuploidy. Plays a key role of midbody function involving abscission of the daughter cells during cytokinesis and appropriate chromosomal and nuclear segregation into the daughter cells.</text>
</comment>
<comment type="subcellular location">
    <subcellularLocation>
        <location evidence="1">Cytoplasm</location>
    </subcellularLocation>
    <subcellularLocation>
        <location evidence="1">Midbody</location>
    </subcellularLocation>
    <text evidence="1">In mitotic cells, concentrates in the midbody of the cytoplasmic bridge linking daughter cells as they are about to separate during cytokinesis.</text>
</comment>
<gene>
    <name type="primary">Klhdc8b</name>
</gene>